<keyword id="KW-0903">Direct protein sequencing</keyword>
<keyword id="KW-1015">Disulfide bond</keyword>
<keyword id="KW-0960">Knottin</keyword>
<keyword id="KW-0611">Plant defense</keyword>
<reference evidence="5" key="1">
    <citation type="journal article" date="2011" name="ACS Chem. Biol.">
        <title>The discovery of cyclotides in the Fabaceae plant family provides new insights into the cyclization, evolution and distribution of circular proteins.</title>
        <authorList>
            <person name="Poth A.G."/>
            <person name="Colgrave M.L."/>
            <person name="Philip R."/>
            <person name="Kerenga B."/>
            <person name="Daly N.L."/>
            <person name="Anderson M."/>
            <person name="Craik D.J."/>
        </authorList>
    </citation>
    <scope>PROTEIN SEQUENCE</scope>
    <scope>DISULFIDE BONDS</scope>
    <scope>CYCLIZATION</scope>
    <scope>MASS SPECTROMETRY</scope>
    <source>
        <tissue evidence="3">Seed</tissue>
    </source>
</reference>
<sequence length="31" mass="3292">GIPCAESCVWIPCTVTALLGCSCKDKVCYLD</sequence>
<protein>
    <recommendedName>
        <fullName evidence="4">Cyclotide cter-E</fullName>
    </recommendedName>
</protein>
<accession>P86845</accession>
<organism>
    <name type="scientific">Clitoria ternatea</name>
    <name type="common">Butterfly pea</name>
    <dbReference type="NCBI Taxonomy" id="43366"/>
    <lineage>
        <taxon>Eukaryota</taxon>
        <taxon>Viridiplantae</taxon>
        <taxon>Streptophyta</taxon>
        <taxon>Embryophyta</taxon>
        <taxon>Tracheophyta</taxon>
        <taxon>Spermatophyta</taxon>
        <taxon>Magnoliopsida</taxon>
        <taxon>eudicotyledons</taxon>
        <taxon>Gunneridae</taxon>
        <taxon>Pentapetalae</taxon>
        <taxon>rosids</taxon>
        <taxon>fabids</taxon>
        <taxon>Fabales</taxon>
        <taxon>Fabaceae</taxon>
        <taxon>Papilionoideae</taxon>
        <taxon>50 kb inversion clade</taxon>
        <taxon>NPAAA clade</taxon>
        <taxon>indigoferoid/millettioid clade</taxon>
        <taxon>Phaseoleae</taxon>
        <taxon>Clitoria</taxon>
    </lineage>
</organism>
<name>CYCE_CLITE</name>
<proteinExistence type="evidence at protein level"/>
<comment type="function">
    <text evidence="1 2">Probably participates in a plant defense mechanism.</text>
</comment>
<comment type="domain">
    <text evidence="5">The presence of a 'disulfide through disulfide knot' structurally defines this protein as a knottin.</text>
</comment>
<comment type="PTM">
    <text evidence="3">Contains 3 disulfide bonds.</text>
</comment>
<comment type="PTM">
    <text evidence="2 3">This is a cyclic peptide.</text>
</comment>
<comment type="mass spectrometry" mass="3265.79" method="Electrospray" evidence="3"/>
<comment type="similarity">
    <text evidence="2">Belongs to the cyclotide family. Bracelet subfamily.</text>
</comment>
<comment type="caution">
    <text evidence="5">This peptide is cyclic. The start position was chosen by similarity to cliotide cter-B for which the DNA sequence is known.</text>
</comment>
<evidence type="ECO:0000250" key="1">
    <source>
        <dbReference type="UniProtKB" id="P56254"/>
    </source>
</evidence>
<evidence type="ECO:0000255" key="2">
    <source>
        <dbReference type="PROSITE-ProRule" id="PRU00395"/>
    </source>
</evidence>
<evidence type="ECO:0000269" key="3">
    <source>
    </source>
</evidence>
<evidence type="ECO:0000303" key="4">
    <source>
    </source>
</evidence>
<evidence type="ECO:0000305" key="5"/>
<dbReference type="SMR" id="P86845"/>
<dbReference type="GO" id="GO:0006952">
    <property type="term" value="P:defense response"/>
    <property type="evidence" value="ECO:0007669"/>
    <property type="project" value="UniProtKB-KW"/>
</dbReference>
<dbReference type="InterPro" id="IPR005535">
    <property type="entry name" value="Cyclotide"/>
</dbReference>
<dbReference type="InterPro" id="IPR012323">
    <property type="entry name" value="Cyclotide_bracelet_CS"/>
</dbReference>
<dbReference type="InterPro" id="IPR036146">
    <property type="entry name" value="Cyclotide_sf"/>
</dbReference>
<dbReference type="Pfam" id="PF03784">
    <property type="entry name" value="Cyclotide"/>
    <property type="match status" value="1"/>
</dbReference>
<dbReference type="PIRSF" id="PIRSF037891">
    <property type="entry name" value="Cycloviolacin"/>
    <property type="match status" value="1"/>
</dbReference>
<dbReference type="SUPFAM" id="SSF57038">
    <property type="entry name" value="Cyclotides"/>
    <property type="match status" value="1"/>
</dbReference>
<dbReference type="PROSITE" id="PS51052">
    <property type="entry name" value="CYCLOTIDE"/>
    <property type="match status" value="1"/>
</dbReference>
<dbReference type="PROSITE" id="PS60008">
    <property type="entry name" value="CYCLOTIDE_BRACELET"/>
    <property type="match status" value="1"/>
</dbReference>
<feature type="peptide" id="PRO_0000405856" description="Cyclotide cter-E" evidence="2 3">
    <location>
        <begin position="1"/>
        <end position="31"/>
    </location>
</feature>
<feature type="disulfide bond" evidence="1 2">
    <location>
        <begin position="4"/>
        <end position="21"/>
    </location>
</feature>
<feature type="disulfide bond" evidence="1 2">
    <location>
        <begin position="8"/>
        <end position="23"/>
    </location>
</feature>
<feature type="disulfide bond" evidence="1 2">
    <location>
        <begin position="13"/>
        <end position="28"/>
    </location>
</feature>
<feature type="cross-link" description="Cyclopeptide (Gly-Asp)" evidence="4">
    <location>
        <begin position="1"/>
        <end position="31"/>
    </location>
</feature>